<sequence length="66" mass="7700">MPKQKTHRGLAKRVKRTGGGGLKRGRAFTSHRFHGKTKKQRRQLRKASMVAKGDYKRIRQQLARMK</sequence>
<comment type="similarity">
    <text evidence="1">Belongs to the bacterial ribosomal protein bL35 family.</text>
</comment>
<protein>
    <recommendedName>
        <fullName evidence="1">Large ribosomal subunit protein bL35</fullName>
    </recommendedName>
    <alternativeName>
        <fullName evidence="3">50S ribosomal protein L35</fullName>
    </alternativeName>
</protein>
<dbReference type="EMBL" id="AE016830">
    <property type="protein sequence ID" value="AAO80723.1"/>
    <property type="molecule type" value="Genomic_DNA"/>
</dbReference>
<dbReference type="RefSeq" id="NP_814653.1">
    <property type="nucleotide sequence ID" value="NC_004668.1"/>
</dbReference>
<dbReference type="RefSeq" id="WP_002355798.1">
    <property type="nucleotide sequence ID" value="NZ_KE136527.1"/>
</dbReference>
<dbReference type="PDB" id="6WU9">
    <property type="method" value="EM"/>
    <property type="resolution" value="2.90 A"/>
    <property type="chains" value="5=2-65"/>
</dbReference>
<dbReference type="PDB" id="7P7Q">
    <property type="method" value="EM"/>
    <property type="resolution" value="2.40 A"/>
    <property type="chains" value="7=1-66"/>
</dbReference>
<dbReference type="PDB" id="7P7R">
    <property type="method" value="EM"/>
    <property type="resolution" value="2.90 A"/>
    <property type="chains" value="7=1-65"/>
</dbReference>
<dbReference type="PDBsum" id="6WU9"/>
<dbReference type="PDBsum" id="7P7Q"/>
<dbReference type="PDBsum" id="7P7R"/>
<dbReference type="EMDB" id="EMD-13241"/>
<dbReference type="EMDB" id="EMD-13242"/>
<dbReference type="SMR" id="Q837C8"/>
<dbReference type="STRING" id="226185.EF_0915"/>
<dbReference type="EnsemblBacteria" id="AAO80723">
    <property type="protein sequence ID" value="AAO80723"/>
    <property type="gene ID" value="EF_0915"/>
</dbReference>
<dbReference type="GeneID" id="60893252"/>
<dbReference type="KEGG" id="efa:EF0915"/>
<dbReference type="PATRIC" id="fig|226185.45.peg.3123"/>
<dbReference type="eggNOG" id="COG0291">
    <property type="taxonomic scope" value="Bacteria"/>
</dbReference>
<dbReference type="HOGENOM" id="CLU_169643_3_0_9"/>
<dbReference type="Proteomes" id="UP000001415">
    <property type="component" value="Chromosome"/>
</dbReference>
<dbReference type="GO" id="GO:0022625">
    <property type="term" value="C:cytosolic large ribosomal subunit"/>
    <property type="evidence" value="ECO:0007669"/>
    <property type="project" value="TreeGrafter"/>
</dbReference>
<dbReference type="GO" id="GO:0003735">
    <property type="term" value="F:structural constituent of ribosome"/>
    <property type="evidence" value="ECO:0007669"/>
    <property type="project" value="InterPro"/>
</dbReference>
<dbReference type="GO" id="GO:0006412">
    <property type="term" value="P:translation"/>
    <property type="evidence" value="ECO:0007669"/>
    <property type="project" value="UniProtKB-UniRule"/>
</dbReference>
<dbReference type="FunFam" id="4.10.410.60:FF:000001">
    <property type="entry name" value="50S ribosomal protein L35"/>
    <property type="match status" value="1"/>
</dbReference>
<dbReference type="Gene3D" id="4.10.410.60">
    <property type="match status" value="1"/>
</dbReference>
<dbReference type="HAMAP" id="MF_00514">
    <property type="entry name" value="Ribosomal_bL35"/>
    <property type="match status" value="1"/>
</dbReference>
<dbReference type="InterPro" id="IPR001706">
    <property type="entry name" value="Ribosomal_bL35"/>
</dbReference>
<dbReference type="InterPro" id="IPR021137">
    <property type="entry name" value="Ribosomal_bL35-like"/>
</dbReference>
<dbReference type="InterPro" id="IPR018265">
    <property type="entry name" value="Ribosomal_bL35_CS"/>
</dbReference>
<dbReference type="InterPro" id="IPR037229">
    <property type="entry name" value="Ribosomal_bL35_sf"/>
</dbReference>
<dbReference type="NCBIfam" id="TIGR00001">
    <property type="entry name" value="rpmI_bact"/>
    <property type="match status" value="1"/>
</dbReference>
<dbReference type="PANTHER" id="PTHR33343">
    <property type="entry name" value="54S RIBOSOMAL PROTEIN BL35M"/>
    <property type="match status" value="1"/>
</dbReference>
<dbReference type="PANTHER" id="PTHR33343:SF1">
    <property type="entry name" value="LARGE RIBOSOMAL SUBUNIT PROTEIN BL35M"/>
    <property type="match status" value="1"/>
</dbReference>
<dbReference type="Pfam" id="PF01632">
    <property type="entry name" value="Ribosomal_L35p"/>
    <property type="match status" value="1"/>
</dbReference>
<dbReference type="PRINTS" id="PR00064">
    <property type="entry name" value="RIBOSOMALL35"/>
</dbReference>
<dbReference type="SUPFAM" id="SSF143034">
    <property type="entry name" value="L35p-like"/>
    <property type="match status" value="1"/>
</dbReference>
<dbReference type="PROSITE" id="PS00936">
    <property type="entry name" value="RIBOSOMAL_L35"/>
    <property type="match status" value="1"/>
</dbReference>
<keyword id="KW-0002">3D-structure</keyword>
<keyword id="KW-1185">Reference proteome</keyword>
<keyword id="KW-0687">Ribonucleoprotein</keyword>
<keyword id="KW-0689">Ribosomal protein</keyword>
<gene>
    <name evidence="1" type="primary">rpmI</name>
    <name type="ordered locus">EF_0915</name>
</gene>
<accession>Q837C8</accession>
<evidence type="ECO:0000255" key="1">
    <source>
        <dbReference type="HAMAP-Rule" id="MF_00514"/>
    </source>
</evidence>
<evidence type="ECO:0000256" key="2">
    <source>
        <dbReference type="SAM" id="MobiDB-lite"/>
    </source>
</evidence>
<evidence type="ECO:0000305" key="3"/>
<evidence type="ECO:0007829" key="4">
    <source>
        <dbReference type="PDB" id="6WU9"/>
    </source>
</evidence>
<reference key="1">
    <citation type="journal article" date="2003" name="Science">
        <title>Role of mobile DNA in the evolution of vancomycin-resistant Enterococcus faecalis.</title>
        <authorList>
            <person name="Paulsen I.T."/>
            <person name="Banerjei L."/>
            <person name="Myers G.S.A."/>
            <person name="Nelson K.E."/>
            <person name="Seshadri R."/>
            <person name="Read T.D."/>
            <person name="Fouts D.E."/>
            <person name="Eisen J.A."/>
            <person name="Gill S.R."/>
            <person name="Heidelberg J.F."/>
            <person name="Tettelin H."/>
            <person name="Dodson R.J."/>
            <person name="Umayam L.A."/>
            <person name="Brinkac L.M."/>
            <person name="Beanan M.J."/>
            <person name="Daugherty S.C."/>
            <person name="DeBoy R.T."/>
            <person name="Durkin S.A."/>
            <person name="Kolonay J.F."/>
            <person name="Madupu R."/>
            <person name="Nelson W.C."/>
            <person name="Vamathevan J.J."/>
            <person name="Tran B."/>
            <person name="Upton J."/>
            <person name="Hansen T."/>
            <person name="Shetty J."/>
            <person name="Khouri H.M."/>
            <person name="Utterback T.R."/>
            <person name="Radune D."/>
            <person name="Ketchum K.A."/>
            <person name="Dougherty B.A."/>
            <person name="Fraser C.M."/>
        </authorList>
    </citation>
    <scope>NUCLEOTIDE SEQUENCE [LARGE SCALE GENOMIC DNA]</scope>
    <source>
        <strain>ATCC 700802 / V583</strain>
    </source>
</reference>
<feature type="chain" id="PRO_0000177361" description="Large ribosomal subunit protein bL35">
    <location>
        <begin position="1"/>
        <end position="66"/>
    </location>
</feature>
<feature type="region of interest" description="Disordered" evidence="2">
    <location>
        <begin position="1"/>
        <end position="53"/>
    </location>
</feature>
<feature type="compositionally biased region" description="Basic residues" evidence="2">
    <location>
        <begin position="1"/>
        <end position="16"/>
    </location>
</feature>
<feature type="compositionally biased region" description="Basic residues" evidence="2">
    <location>
        <begin position="23"/>
        <end position="45"/>
    </location>
</feature>
<feature type="helix" evidence="4">
    <location>
        <begin position="8"/>
        <end position="11"/>
    </location>
</feature>
<feature type="strand" evidence="4">
    <location>
        <begin position="14"/>
        <end position="16"/>
    </location>
</feature>
<feature type="strand" evidence="4">
    <location>
        <begin position="22"/>
        <end position="24"/>
    </location>
</feature>
<feature type="helix" evidence="4">
    <location>
        <begin position="33"/>
        <end position="35"/>
    </location>
</feature>
<feature type="helix" evidence="4">
    <location>
        <begin position="38"/>
        <end position="43"/>
    </location>
</feature>
<feature type="helix" evidence="4">
    <location>
        <begin position="52"/>
        <end position="58"/>
    </location>
</feature>
<feature type="helix" evidence="4">
    <location>
        <begin position="59"/>
        <end position="62"/>
    </location>
</feature>
<organism>
    <name type="scientific">Enterococcus faecalis (strain ATCC 700802 / V583)</name>
    <dbReference type="NCBI Taxonomy" id="226185"/>
    <lineage>
        <taxon>Bacteria</taxon>
        <taxon>Bacillati</taxon>
        <taxon>Bacillota</taxon>
        <taxon>Bacilli</taxon>
        <taxon>Lactobacillales</taxon>
        <taxon>Enterococcaceae</taxon>
        <taxon>Enterococcus</taxon>
    </lineage>
</organism>
<proteinExistence type="evidence at protein level"/>
<name>RL35_ENTFA</name>